<reference key="1">
    <citation type="submission" date="2001-05" db="EMBL/GenBank/DDBJ databases">
        <title>Comparative sequencing of RP1: a closer look at a highly divergent retina-specific protein.</title>
        <authorList>
            <person name="Malone K.A."/>
        </authorList>
    </citation>
    <scope>NUCLEOTIDE SEQUENCE [MRNA]</scope>
</reference>
<evidence type="ECO:0000250" key="1"/>
<evidence type="ECO:0000255" key="2">
    <source>
        <dbReference type="PROSITE-ProRule" id="PRU00072"/>
    </source>
</evidence>
<evidence type="ECO:0000256" key="3">
    <source>
        <dbReference type="SAM" id="MobiDB-lite"/>
    </source>
</evidence>
<comment type="function">
    <text evidence="1">Microtubule-associated protein regulating the stability and length of the microtubule-based axoneme of photoreceptors. Required for the differentiation of photoreceptor cells, it plays a role in the organization of the outer segment of rod and cone photoreceptors ensuring the correct orientation and higher-order stacking of outer segment disks along the photoreceptor axoneme (By similarity).</text>
</comment>
<comment type="subunit">
    <text evidence="1">Interacts (via the doublecortin domains) with microtubules. Interacts with RP1L1 (By similarity). Interacts with MAK (By similarity).</text>
</comment>
<comment type="subcellular location">
    <subcellularLocation>
        <location evidence="1">Cytoplasm</location>
        <location evidence="1">Cytoskeleton</location>
        <location evidence="1">Cilium axoneme</location>
    </subcellularLocation>
    <subcellularLocation>
        <location evidence="1">Cell projection</location>
        <location evidence="1">Cilium</location>
        <location evidence="1">Photoreceptor outer segment</location>
    </subcellularLocation>
    <text evidence="1">Specifically localized in the connecting cilia of rod and cone photoreceptors.</text>
</comment>
<comment type="domain">
    <text evidence="1">The doublecortin domains, which mediate interaction with microtubules, are required for regulation of microtubule polymerization and function in photoreceptor differentiation.</text>
</comment>
<name>RP1_SAIBB</name>
<keyword id="KW-0966">Cell projection</keyword>
<keyword id="KW-0969">Cilium</keyword>
<keyword id="KW-0970">Cilium biogenesis/degradation</keyword>
<keyword id="KW-0963">Cytoplasm</keyword>
<keyword id="KW-0206">Cytoskeleton</keyword>
<keyword id="KW-0493">Microtubule</keyword>
<keyword id="KW-1185">Reference proteome</keyword>
<keyword id="KW-0677">Repeat</keyword>
<keyword id="KW-0716">Sensory transduction</keyword>
<keyword id="KW-0844">Vision</keyword>
<feature type="chain" id="PRO_0000097413" description="Oxygen-regulated protein 1">
    <location>
        <begin position="1"/>
        <end position="2149"/>
    </location>
</feature>
<feature type="domain" description="Doublecortin 1" evidence="2">
    <location>
        <begin position="36"/>
        <end position="118"/>
    </location>
</feature>
<feature type="domain" description="Doublecortin 2" evidence="2">
    <location>
        <begin position="152"/>
        <end position="231"/>
    </location>
</feature>
<feature type="region of interest" description="Disordered" evidence="3">
    <location>
        <begin position="1"/>
        <end position="25"/>
    </location>
</feature>
<feature type="region of interest" description="Disordered" evidence="3">
    <location>
        <begin position="127"/>
        <end position="148"/>
    </location>
</feature>
<feature type="region of interest" description="Disordered" evidence="3">
    <location>
        <begin position="351"/>
        <end position="373"/>
    </location>
</feature>
<feature type="region of interest" description="Disordered" evidence="3">
    <location>
        <begin position="1435"/>
        <end position="1456"/>
    </location>
</feature>
<feature type="region of interest" description="Disordered" evidence="3">
    <location>
        <begin position="1583"/>
        <end position="1613"/>
    </location>
</feature>
<feature type="compositionally biased region" description="Polar residues" evidence="3">
    <location>
        <begin position="1"/>
        <end position="20"/>
    </location>
</feature>
<feature type="compositionally biased region" description="Polar residues" evidence="3">
    <location>
        <begin position="1446"/>
        <end position="1456"/>
    </location>
</feature>
<proteinExistence type="evidence at transcript level"/>
<accession>Q8MJ03</accession>
<organism>
    <name type="scientific">Saimiri boliviensis boliviensis</name>
    <name type="common">Bolivian squirrel monkey</name>
    <dbReference type="NCBI Taxonomy" id="39432"/>
    <lineage>
        <taxon>Eukaryota</taxon>
        <taxon>Metazoa</taxon>
        <taxon>Chordata</taxon>
        <taxon>Craniata</taxon>
        <taxon>Vertebrata</taxon>
        <taxon>Euteleostomi</taxon>
        <taxon>Mammalia</taxon>
        <taxon>Eutheria</taxon>
        <taxon>Euarchontoglires</taxon>
        <taxon>Primates</taxon>
        <taxon>Haplorrhini</taxon>
        <taxon>Platyrrhini</taxon>
        <taxon>Cebidae</taxon>
        <taxon>Saimiriinae</taxon>
        <taxon>Saimiri</taxon>
    </lineage>
</organism>
<dbReference type="EMBL" id="AY034787">
    <property type="protein sequence ID" value="AAK58444.1"/>
    <property type="molecule type" value="mRNA"/>
</dbReference>
<dbReference type="RefSeq" id="NP_001266942.1">
    <property type="nucleotide sequence ID" value="NM_001280013.1"/>
</dbReference>
<dbReference type="SMR" id="Q8MJ03"/>
<dbReference type="STRING" id="39432.ENSSBOP00000016672"/>
<dbReference type="GeneID" id="101034977"/>
<dbReference type="CTD" id="6101"/>
<dbReference type="Proteomes" id="UP000233220">
    <property type="component" value="Whole Genome Shotgun Assembly"/>
</dbReference>
<dbReference type="GO" id="GO:0005930">
    <property type="term" value="C:axoneme"/>
    <property type="evidence" value="ECO:0007669"/>
    <property type="project" value="TreeGrafter"/>
</dbReference>
<dbReference type="GO" id="GO:0005874">
    <property type="term" value="C:microtubule"/>
    <property type="evidence" value="ECO:0007669"/>
    <property type="project" value="UniProtKB-KW"/>
</dbReference>
<dbReference type="GO" id="GO:0005875">
    <property type="term" value="C:microtubule associated complex"/>
    <property type="evidence" value="ECO:0000250"/>
    <property type="project" value="UniProtKB"/>
</dbReference>
<dbReference type="GO" id="GO:0001917">
    <property type="term" value="C:photoreceptor inner segment"/>
    <property type="evidence" value="ECO:0000250"/>
    <property type="project" value="UniProtKB"/>
</dbReference>
<dbReference type="GO" id="GO:0001750">
    <property type="term" value="C:photoreceptor outer segment"/>
    <property type="evidence" value="ECO:0000250"/>
    <property type="project" value="UniProtKB"/>
</dbReference>
<dbReference type="GO" id="GO:0008017">
    <property type="term" value="F:microtubule binding"/>
    <property type="evidence" value="ECO:0000250"/>
    <property type="project" value="UniProtKB"/>
</dbReference>
<dbReference type="GO" id="GO:0035082">
    <property type="term" value="P:axoneme assembly"/>
    <property type="evidence" value="ECO:0000250"/>
    <property type="project" value="UniProtKB"/>
</dbReference>
<dbReference type="GO" id="GO:0035556">
    <property type="term" value="P:intracellular signal transduction"/>
    <property type="evidence" value="ECO:0007669"/>
    <property type="project" value="InterPro"/>
</dbReference>
<dbReference type="GO" id="GO:0042461">
    <property type="term" value="P:photoreceptor cell development"/>
    <property type="evidence" value="ECO:0000250"/>
    <property type="project" value="UniProtKB"/>
</dbReference>
<dbReference type="GO" id="GO:0045494">
    <property type="term" value="P:photoreceptor cell maintenance"/>
    <property type="evidence" value="ECO:0000250"/>
    <property type="project" value="UniProtKB"/>
</dbReference>
<dbReference type="GO" id="GO:0035845">
    <property type="term" value="P:photoreceptor cell outer segment organization"/>
    <property type="evidence" value="ECO:0000250"/>
    <property type="project" value="UniProtKB"/>
</dbReference>
<dbReference type="GO" id="GO:0046549">
    <property type="term" value="P:retinal cone cell development"/>
    <property type="evidence" value="ECO:0000250"/>
    <property type="project" value="UniProtKB"/>
</dbReference>
<dbReference type="GO" id="GO:0046548">
    <property type="term" value="P:retinal rod cell development"/>
    <property type="evidence" value="ECO:0000250"/>
    <property type="project" value="UniProtKB"/>
</dbReference>
<dbReference type="GO" id="GO:0007601">
    <property type="term" value="P:visual perception"/>
    <property type="evidence" value="ECO:0007669"/>
    <property type="project" value="UniProtKB-KW"/>
</dbReference>
<dbReference type="CDD" id="cd17145">
    <property type="entry name" value="DCX1_RP1"/>
    <property type="match status" value="1"/>
</dbReference>
<dbReference type="CDD" id="cd17147">
    <property type="entry name" value="DCX2_RP1"/>
    <property type="match status" value="1"/>
</dbReference>
<dbReference type="FunFam" id="3.10.20.230:FF:000006">
    <property type="entry name" value="Oxygen-regulated protein 1"/>
    <property type="match status" value="1"/>
</dbReference>
<dbReference type="FunFam" id="3.10.20.230:FF:000007">
    <property type="entry name" value="Oxygen-regulated protein 1"/>
    <property type="match status" value="1"/>
</dbReference>
<dbReference type="Gene3D" id="3.10.20.230">
    <property type="entry name" value="Doublecortin domain"/>
    <property type="match status" value="2"/>
</dbReference>
<dbReference type="InterPro" id="IPR003533">
    <property type="entry name" value="Doublecortin_dom"/>
</dbReference>
<dbReference type="InterPro" id="IPR036572">
    <property type="entry name" value="Doublecortin_dom_sf"/>
</dbReference>
<dbReference type="PANTHER" id="PTHR23005:SF4">
    <property type="entry name" value="OXYGEN-REGULATED PROTEIN 1"/>
    <property type="match status" value="1"/>
</dbReference>
<dbReference type="PANTHER" id="PTHR23005">
    <property type="entry name" value="RETINITIS PIGMENTOSA 1 PROTEIN"/>
    <property type="match status" value="1"/>
</dbReference>
<dbReference type="Pfam" id="PF03607">
    <property type="entry name" value="DCX"/>
    <property type="match status" value="2"/>
</dbReference>
<dbReference type="SMART" id="SM00537">
    <property type="entry name" value="DCX"/>
    <property type="match status" value="2"/>
</dbReference>
<dbReference type="SUPFAM" id="SSF89837">
    <property type="entry name" value="Doublecortin (DC)"/>
    <property type="match status" value="2"/>
</dbReference>
<dbReference type="PROSITE" id="PS50309">
    <property type="entry name" value="DC"/>
    <property type="match status" value="2"/>
</dbReference>
<sequence>MSDTPSTGFSMIHPTSSEGQVPSPRHLSLTHPVVAKRISFYKSGDPQFGGVRVVVNPRSFKSFDALLDNLSRKVPLPFGVRNISTPRGRHSITRLEELEDGESYLCSHGRKVQPVDLDKARRRPRPWLSSRAVSTHAPPHSVAAPGMPRAPRSLVVFRNGDPKTRRAVLLSRKVTQSFEAFLQHLTEVMQRPVVKLYATDGRRVPSLQAVILSSGAVVAAGREPFKPGNYDIQKYLLPARLPGISQRVYPKGNGKSESRKISTHMASSSRSQIYSVSSEKTHNNDCYLDYSFVPENYLALEKNDSQNLPIYPSEDDVEKSIIFNQDGTMTVEMKVRFRIKEEETIKWTTTVSKTGPSNNDEKSEMSFPGRTESRSSGLKLAACSFSADVSPTERSSNQEGSLAEEINIQMTDQEAETCSSASWENATVDTDIIQGTQDQAKHRFYRPPTPGLRRVRQKKSVIGSVTLVSETEVQEKMIGQFSYSEERESGENKSEYHMFTHSCSKMSSVSNKPVLVQINNSDQMEESSLERKKENRLLKSSAISAGVIEITSQKMLELSHNNGLPSTISNNSIVEEDVVDSVVSDNKTGIKNLRTYGNTSDRFSPVSADATHFSSNKSRADKNISEAPASVASSTVTARIDRLINEFAQCGLTKLPKTEKKILSSVASKKKKKKSQQQAINSRYQDGQLATTGILNKNERINAGGRITKEMILQDSDSPLKGGVLCEEDLRTSETVIESNTFCSKSNLNPMISKNFHRNKLNTTQNSKVQGLLTKRKSRPLRKISLGTPKKREIGQGDKVFPHNESKYSKSTCENKSLFHVFNLLEQKPKHFSGPRSQAEVASGYLRGMAKKSLVSKVTDSHITLKSQKKQKGDKLKASAILSKQHAATRANSLASLKKPDFPEDIAHPSVQTYIQNWLHNINPYPTLKPIKSAPVCKNEISVVNCNNSFSGNDPHTSSGKINNFVMESNKHITKIASLTGDNLCKEGDKSFIANDTGEDLCETQVGSLNDAYLVSLHEHCTSPQSAINDRNTKSRISPEKSGPEINLVYQEINLAKKRQSVEAAIQVDPIEEDTPKDLLPVLMLHQLQASVPSTPKTQNGVVRMPGSLADVSFPSAICNSSTNLLLAWLLVLNLKGSMNSFCQGDAHKTTNKSSETLALLEILKHIAITEEADDLKAAVANLVESTTNHFGLSEKEQDTVPIDLSANCSIVNIQSVPKCNENEGTQGIFSFDGGCSAVEACAPEVCVLELTYPPREVCTVNKAYVPKETCNLSDTFFPSDGYTVDRTSMNKACFVGEVCSLTDTVFSDKACAQKENHIYEGACATDETCVPVDVCNTTGFLNSKQNTYTDNLESTEELERGDDVQKDLNILTDPEYKNGFNTLVSHQNVSNLSPCGLCVSEEAEFDKKHSSADDFKNCSLNLFQDKNAYTSFDMEEPRTSEEPGSVTNSVTSSERNISELESFEELENQDTDIFNTEINVGEKATEEFIQEEIEASKTLELLDISSKNIMVEERKNGIIYETISKRLATPPSLVFCYDSKQNNEKETNEGETNMVKMMVKSMETGSYSESSPDMKKCIKSPVTSDWSDYRPDSDSEQAYKTSSDDPNDSGELEKEYNIGFVKRAIEKLYGKADIIKPSFFPGSTRKSQVCPYNSVEFQCTRRASLYDSEGQSFGSSERVSSSSPVLQEFQEEGQDKCDINHVRNNYCGGDIVEPGTKENDHSRVLTDIEEGVLIDKGKWLLKENHLLRMSYENPGVCGNADTTSVDTLLDNNSSEVPYSHFGNLAPGPTMDELSSSELEELTQPLELKCNYFKMPHGSDSEPFHEDLLGVHNETCDKERIANHHTEEKCPHQSERICTSVTHSFMSAGNKVYPVSDDAIKNQPLPGSNMIHGTLQETDSLDKLYALCGQHCPILTVTIQPVNEEDRGFAYRKESDIENFLGFYLWMKIHPYLLQTDKNMFREENNKASMRKNLINNATGDIFDEFYFSNIFDLMDKRRKQKRINFLELQEAGNLKKFQPDLKERFCMYFLHTSSLVVGNMNSNTQDLSSQTNEIFKAVDENNNLLNNRFQGSRTNLNQVVRENISRYFFEMLGQACLLDICQVETSLNISNRNILEELCMFEDENIFIWEEEDILNLTDLESSREQDL</sequence>
<gene>
    <name type="primary">RP1</name>
</gene>
<protein>
    <recommendedName>
        <fullName>Oxygen-regulated protein 1</fullName>
    </recommendedName>
    <alternativeName>
        <fullName>Retinitis pigmentosa RP1 protein homolog</fullName>
    </alternativeName>
</protein>